<feature type="signal peptide" evidence="1">
    <location>
        <begin position="1"/>
        <end position="29"/>
    </location>
</feature>
<feature type="chain" id="PRO_0000269570" description="Ficolin-1">
    <location>
        <begin position="30"/>
        <end position="326"/>
    </location>
</feature>
<feature type="domain" description="Collagen-like">
    <location>
        <begin position="55"/>
        <end position="93"/>
    </location>
</feature>
<feature type="domain" description="Fibrinogen C-terminal" evidence="4">
    <location>
        <begin position="109"/>
        <end position="326"/>
    </location>
</feature>
<feature type="region of interest" description="Disordered" evidence="5">
    <location>
        <begin position="61"/>
        <end position="110"/>
    </location>
</feature>
<feature type="region of interest" description="A domain; contributes to trimerization" evidence="1">
    <location>
        <begin position="115"/>
        <end position="154"/>
    </location>
</feature>
<feature type="region of interest" description="B domain; contributes to trimerization" evidence="1">
    <location>
        <begin position="155"/>
        <end position="243"/>
    </location>
</feature>
<feature type="region of interest" description="P domain" evidence="2">
    <location>
        <begin position="317"/>
        <end position="326"/>
    </location>
</feature>
<feature type="compositionally biased region" description="Low complexity" evidence="5">
    <location>
        <begin position="61"/>
        <end position="71"/>
    </location>
</feature>
<feature type="compositionally biased region" description="Low complexity" evidence="5">
    <location>
        <begin position="78"/>
        <end position="89"/>
    </location>
</feature>
<feature type="compositionally biased region" description="Basic and acidic residues" evidence="5">
    <location>
        <begin position="90"/>
        <end position="104"/>
    </location>
</feature>
<feature type="binding site" evidence="2">
    <location>
        <position position="262"/>
    </location>
    <ligand>
        <name>Ca(2+)</name>
        <dbReference type="ChEBI" id="CHEBI:29108"/>
    </ligand>
</feature>
<feature type="binding site" evidence="2">
    <location>
        <position position="264"/>
    </location>
    <ligand>
        <name>Ca(2+)</name>
        <dbReference type="ChEBI" id="CHEBI:29108"/>
    </ligand>
</feature>
<feature type="binding site" evidence="2">
    <location>
        <begin position="282"/>
        <end position="284"/>
    </location>
    <ligand>
        <name>a carbohydrate</name>
        <dbReference type="ChEBI" id="CHEBI:16646"/>
    </ligand>
</feature>
<feature type="site" description="Mediates specificity for sialic acids" evidence="2">
    <location>
        <position position="300"/>
    </location>
</feature>
<feature type="site" description="Mediates specificity for sialic acids" evidence="2">
    <location>
        <position position="312"/>
    </location>
</feature>
<feature type="glycosylation site" description="N-linked (GlcNAc...) asparagine" evidence="3">
    <location>
        <position position="265"/>
    </location>
</feature>
<feature type="glycosylation site" description="N-linked (GlcNAc...) asparagine" evidence="3">
    <location>
        <position position="313"/>
    </location>
</feature>
<feature type="disulfide bond" evidence="4">
    <location>
        <begin position="111"/>
        <end position="139"/>
    </location>
</feature>
<feature type="disulfide bond" evidence="4">
    <location>
        <begin position="118"/>
        <end position="146"/>
    </location>
</feature>
<feature type="disulfide bond" evidence="4">
    <location>
        <begin position="270"/>
        <end position="283"/>
    </location>
</feature>
<keyword id="KW-0106">Calcium</keyword>
<keyword id="KW-1003">Cell membrane</keyword>
<keyword id="KW-0176">Collagen</keyword>
<keyword id="KW-1015">Disulfide bond</keyword>
<keyword id="KW-0325">Glycoprotein</keyword>
<keyword id="KW-0391">Immunity</keyword>
<keyword id="KW-0399">Innate immunity</keyword>
<keyword id="KW-0430">Lectin</keyword>
<keyword id="KW-0472">Membrane</keyword>
<keyword id="KW-0479">Metal-binding</keyword>
<keyword id="KW-1185">Reference proteome</keyword>
<keyword id="KW-0677">Repeat</keyword>
<keyword id="KW-0964">Secreted</keyword>
<keyword id="KW-0732">Signal</keyword>
<name>FCN1_PIG</name>
<proteinExistence type="evidence at protein level"/>
<reference key="1">
    <citation type="journal article" date="1993" name="J. Biol. Chem.">
        <title>Molecular cloning and characterization of ficolin, a multimeric protein with fibrinogen- and collagen-like domains.</title>
        <authorList>
            <person name="Ichijo H."/>
            <person name="Hellman U."/>
            <person name="Wernstedt C."/>
            <person name="Gonez L.J."/>
            <person name="Claesson-Welsh L."/>
            <person name="Heldin C.H."/>
            <person name="Miyazono K."/>
        </authorList>
    </citation>
    <scope>NUCLEOTIDE SEQUENCE [MRNA]</scope>
    <scope>SUBUNIT</scope>
    <scope>TISSUE SPECIFICITY</scope>
    <source>
        <tissue>Uterus</tissue>
    </source>
</reference>
<comment type="function">
    <text evidence="2">Extracellular lectin functioning as a pattern-recognition receptor in innate immunity. Binds the sugar moieties of pathogen-associated molecular patterns (PAMPs) displayed on microbes and activates the lectin pathway of the complement system. May also activate monocytes through a G protein-coupled receptor, FFAR2, inducing the secretion of interleukin-8/IL-8. Binds preferentially to 9-O-acetylated 2-6-linked sialic acid derivatives and to various glycans containing sialic acid engaged in a 2-3 linkage (By similarity).</text>
</comment>
<comment type="subunit">
    <text evidence="2">Homotrimer. Interacts with elastin/ELN. Interacts (via Fibrinogen C-terminal domain) with FFAR2. Interacts with CRP; may regulate monocyte activation by FCN1.</text>
</comment>
<comment type="subcellular location">
    <subcellularLocation>
        <location evidence="2">Secreted</location>
    </subcellularLocation>
    <subcellularLocation>
        <location evidence="2">Cell membrane</location>
        <topology evidence="2">Peripheral membrane protein</topology>
        <orientation evidence="2">Extracellular side</orientation>
    </subcellularLocation>
    <text evidence="2">Found on the monocyte and granulocyte surface.</text>
</comment>
<comment type="tissue specificity">
    <text evidence="6">Most abundantly expressed in placenta and lung.</text>
</comment>
<comment type="domain">
    <text evidence="2">The fibrinogen C-terminal domain mediates calcium-dependent binding to carbohydrates and tethering to the cell surface in monocytes and granulocytes. The domain undergoes a conformational switch at pH under 6.2, and looses its carbohydrate-binding ability.</text>
</comment>
<comment type="similarity">
    <text evidence="7">Belongs to the ficolin lectin family.</text>
</comment>
<sequence length="326" mass="35246">MELSRVAVALGPTGQLLLFLSFQTLAAQAADTCPEVKVVGLEGSDKLSILRGCPGLPGAAGPKGEAGANGPKGERGSPGVVGKAGPAGPKGDRGEKGARGEKGEPGQLQSCATGPRTCKELLTRGHFLSGWHTIYLPDCQPLTVLCDMDTDGGGWTVFQRRSDGSVDFYRDWAAYKRGFGSQLGEFWLGNDHIHALTAQGTSELRVDLVDFEGNHQFAKYRSFQVAGEAEKYKLVLGGFLEGNAGDSLSSHRDQFFSTKDQDNDNHSGNCAEQYHGAWWYNACHSSNLNGRYLRGLHTSYANGVNWRSGRGYNYSYQVSEMKVRLT</sequence>
<accession>Q29042</accession>
<dbReference type="EMBL" id="L12345">
    <property type="protein sequence ID" value="AAC69641.1"/>
    <property type="molecule type" value="mRNA"/>
</dbReference>
<dbReference type="PIR" id="B47172">
    <property type="entry name" value="B47172"/>
</dbReference>
<dbReference type="RefSeq" id="NP_999325.1">
    <property type="nucleotide sequence ID" value="NM_214160.2"/>
</dbReference>
<dbReference type="SMR" id="Q29042"/>
<dbReference type="FunCoup" id="Q29042">
    <property type="interactions" value="13"/>
</dbReference>
<dbReference type="STRING" id="9823.ENSSSCP00000068286"/>
<dbReference type="GlyCosmos" id="Q29042">
    <property type="glycosylation" value="2 sites, No reported glycans"/>
</dbReference>
<dbReference type="GlyGen" id="Q29042">
    <property type="glycosylation" value="2 sites"/>
</dbReference>
<dbReference type="PaxDb" id="9823-ENSSSCP00000023182"/>
<dbReference type="PeptideAtlas" id="Q29042"/>
<dbReference type="GeneID" id="397316"/>
<dbReference type="KEGG" id="ssc:397316"/>
<dbReference type="CTD" id="2219"/>
<dbReference type="eggNOG" id="KOG2579">
    <property type="taxonomic scope" value="Eukaryota"/>
</dbReference>
<dbReference type="InParanoid" id="Q29042"/>
<dbReference type="OrthoDB" id="7735550at2759"/>
<dbReference type="Proteomes" id="UP000008227">
    <property type="component" value="Unplaced"/>
</dbReference>
<dbReference type="Proteomes" id="UP000314985">
    <property type="component" value="Unplaced"/>
</dbReference>
<dbReference type="Proteomes" id="UP000694570">
    <property type="component" value="Unplaced"/>
</dbReference>
<dbReference type="Proteomes" id="UP000694571">
    <property type="component" value="Unplaced"/>
</dbReference>
<dbReference type="Proteomes" id="UP000694720">
    <property type="component" value="Unplaced"/>
</dbReference>
<dbReference type="Proteomes" id="UP000694722">
    <property type="component" value="Unplaced"/>
</dbReference>
<dbReference type="Proteomes" id="UP000694723">
    <property type="component" value="Unplaced"/>
</dbReference>
<dbReference type="Proteomes" id="UP000694724">
    <property type="component" value="Unplaced"/>
</dbReference>
<dbReference type="Proteomes" id="UP000694725">
    <property type="component" value="Unplaced"/>
</dbReference>
<dbReference type="Proteomes" id="UP000694726">
    <property type="component" value="Unplaced"/>
</dbReference>
<dbReference type="Proteomes" id="UP000694727">
    <property type="component" value="Unplaced"/>
</dbReference>
<dbReference type="Proteomes" id="UP000694728">
    <property type="component" value="Unplaced"/>
</dbReference>
<dbReference type="GO" id="GO:0005581">
    <property type="term" value="C:collagen trimer"/>
    <property type="evidence" value="ECO:0007669"/>
    <property type="project" value="UniProtKB-KW"/>
</dbReference>
<dbReference type="GO" id="GO:0062023">
    <property type="term" value="C:collagen-containing extracellular matrix"/>
    <property type="evidence" value="ECO:0000318"/>
    <property type="project" value="GO_Central"/>
</dbReference>
<dbReference type="GO" id="GO:0005615">
    <property type="term" value="C:extracellular space"/>
    <property type="evidence" value="ECO:0000318"/>
    <property type="project" value="GO_Central"/>
</dbReference>
<dbReference type="GO" id="GO:0005886">
    <property type="term" value="C:plasma membrane"/>
    <property type="evidence" value="ECO:0007669"/>
    <property type="project" value="UniProtKB-SubCell"/>
</dbReference>
<dbReference type="GO" id="GO:0003823">
    <property type="term" value="F:antigen binding"/>
    <property type="evidence" value="ECO:0000318"/>
    <property type="project" value="GO_Central"/>
</dbReference>
<dbReference type="GO" id="GO:0030246">
    <property type="term" value="F:carbohydrate binding"/>
    <property type="evidence" value="ECO:0007669"/>
    <property type="project" value="UniProtKB-KW"/>
</dbReference>
<dbReference type="GO" id="GO:0097367">
    <property type="term" value="F:carbohydrate derivative binding"/>
    <property type="evidence" value="ECO:0000318"/>
    <property type="project" value="GO_Central"/>
</dbReference>
<dbReference type="GO" id="GO:0046872">
    <property type="term" value="F:metal ion binding"/>
    <property type="evidence" value="ECO:0007669"/>
    <property type="project" value="UniProtKB-KW"/>
</dbReference>
<dbReference type="GO" id="GO:0005102">
    <property type="term" value="F:signaling receptor binding"/>
    <property type="evidence" value="ECO:0000318"/>
    <property type="project" value="GO_Central"/>
</dbReference>
<dbReference type="GO" id="GO:0001867">
    <property type="term" value="P:complement activation, lectin pathway"/>
    <property type="evidence" value="ECO:0000318"/>
    <property type="project" value="GO_Central"/>
</dbReference>
<dbReference type="CDD" id="cd00087">
    <property type="entry name" value="FReD"/>
    <property type="match status" value="1"/>
</dbReference>
<dbReference type="FunFam" id="3.90.215.10:FF:000001">
    <property type="entry name" value="Tenascin isoform 1"/>
    <property type="match status" value="1"/>
</dbReference>
<dbReference type="Gene3D" id="3.90.215.10">
    <property type="entry name" value="Gamma Fibrinogen, chain A, domain 1"/>
    <property type="match status" value="1"/>
</dbReference>
<dbReference type="InterPro" id="IPR008160">
    <property type="entry name" value="Collagen"/>
</dbReference>
<dbReference type="InterPro" id="IPR036056">
    <property type="entry name" value="Fibrinogen-like_C"/>
</dbReference>
<dbReference type="InterPro" id="IPR014716">
    <property type="entry name" value="Fibrinogen_a/b/g_C_1"/>
</dbReference>
<dbReference type="InterPro" id="IPR002181">
    <property type="entry name" value="Fibrinogen_a/b/g_C_dom"/>
</dbReference>
<dbReference type="InterPro" id="IPR050373">
    <property type="entry name" value="Fibrinogen_C-term_domain"/>
</dbReference>
<dbReference type="InterPro" id="IPR020837">
    <property type="entry name" value="Fibrinogen_CS"/>
</dbReference>
<dbReference type="NCBIfam" id="NF040941">
    <property type="entry name" value="GGGWT_bact"/>
    <property type="match status" value="1"/>
</dbReference>
<dbReference type="PANTHER" id="PTHR19143">
    <property type="entry name" value="FIBRINOGEN/TENASCIN/ANGIOPOEITIN"/>
    <property type="match status" value="1"/>
</dbReference>
<dbReference type="PANTHER" id="PTHR19143:SF433">
    <property type="entry name" value="FICOLIN-2"/>
    <property type="match status" value="1"/>
</dbReference>
<dbReference type="Pfam" id="PF01391">
    <property type="entry name" value="Collagen"/>
    <property type="match status" value="1"/>
</dbReference>
<dbReference type="Pfam" id="PF00147">
    <property type="entry name" value="Fibrinogen_C"/>
    <property type="match status" value="1"/>
</dbReference>
<dbReference type="SMART" id="SM00186">
    <property type="entry name" value="FBG"/>
    <property type="match status" value="1"/>
</dbReference>
<dbReference type="SUPFAM" id="SSF56496">
    <property type="entry name" value="Fibrinogen C-terminal domain-like"/>
    <property type="match status" value="1"/>
</dbReference>
<dbReference type="PROSITE" id="PS00514">
    <property type="entry name" value="FIBRINOGEN_C_1"/>
    <property type="match status" value="1"/>
</dbReference>
<dbReference type="PROSITE" id="PS51406">
    <property type="entry name" value="FIBRINOGEN_C_2"/>
    <property type="match status" value="1"/>
</dbReference>
<organism>
    <name type="scientific">Sus scrofa</name>
    <name type="common">Pig</name>
    <dbReference type="NCBI Taxonomy" id="9823"/>
    <lineage>
        <taxon>Eukaryota</taxon>
        <taxon>Metazoa</taxon>
        <taxon>Chordata</taxon>
        <taxon>Craniata</taxon>
        <taxon>Vertebrata</taxon>
        <taxon>Euteleostomi</taxon>
        <taxon>Mammalia</taxon>
        <taxon>Eutheria</taxon>
        <taxon>Laurasiatheria</taxon>
        <taxon>Artiodactyla</taxon>
        <taxon>Suina</taxon>
        <taxon>Suidae</taxon>
        <taxon>Sus</taxon>
    </lineage>
</organism>
<evidence type="ECO:0000250" key="1"/>
<evidence type="ECO:0000250" key="2">
    <source>
        <dbReference type="UniProtKB" id="O00602"/>
    </source>
</evidence>
<evidence type="ECO:0000255" key="3"/>
<evidence type="ECO:0000255" key="4">
    <source>
        <dbReference type="PROSITE-ProRule" id="PRU00739"/>
    </source>
</evidence>
<evidence type="ECO:0000256" key="5">
    <source>
        <dbReference type="SAM" id="MobiDB-lite"/>
    </source>
</evidence>
<evidence type="ECO:0000269" key="6">
    <source>
    </source>
</evidence>
<evidence type="ECO:0000305" key="7"/>
<protein>
    <recommendedName>
        <fullName>Ficolin-1</fullName>
    </recommendedName>
    <alternativeName>
        <fullName>Ficolin-A</fullName>
    </alternativeName>
    <alternativeName>
        <fullName>Ficolin-alpha</fullName>
    </alternativeName>
</protein>
<gene>
    <name type="primary">FCN1</name>
</gene>